<name>COPZ_STAAE</name>
<gene>
    <name type="primary">copZ</name>
    <name type="ordered locus">NWMN_2458</name>
</gene>
<accession>A6QK48</accession>
<keyword id="KW-0143">Chaperone</keyword>
<keyword id="KW-0186">Copper</keyword>
<keyword id="KW-0963">Cytoplasm</keyword>
<keyword id="KW-0479">Metal-binding</keyword>
<proteinExistence type="inferred from homology"/>
<sequence>MSQEILNVEGMSCGHCKSAVESALNNIDGVTSADVNLENGQVSVQYDDSKVAVSQMKDAIEDQGYDVV</sequence>
<dbReference type="EMBL" id="AP009351">
    <property type="protein sequence ID" value="BAF68730.1"/>
    <property type="molecule type" value="Genomic_DNA"/>
</dbReference>
<dbReference type="RefSeq" id="WP_000076661.1">
    <property type="nucleotide sequence ID" value="NZ_JBBIAE010000005.1"/>
</dbReference>
<dbReference type="SMR" id="A6QK48"/>
<dbReference type="KEGG" id="sae:NWMN_2458"/>
<dbReference type="HOGENOM" id="CLU_134973_10_4_9"/>
<dbReference type="Proteomes" id="UP000006386">
    <property type="component" value="Chromosome"/>
</dbReference>
<dbReference type="GO" id="GO:0005737">
    <property type="term" value="C:cytoplasm"/>
    <property type="evidence" value="ECO:0007669"/>
    <property type="project" value="UniProtKB-SubCell"/>
</dbReference>
<dbReference type="GO" id="GO:0005507">
    <property type="term" value="F:copper ion binding"/>
    <property type="evidence" value="ECO:0007669"/>
    <property type="project" value="InterPro"/>
</dbReference>
<dbReference type="CDD" id="cd00371">
    <property type="entry name" value="HMA"/>
    <property type="match status" value="1"/>
</dbReference>
<dbReference type="FunFam" id="3.30.70.100:FF:000005">
    <property type="entry name" value="Copper-exporting P-type ATPase A"/>
    <property type="match status" value="1"/>
</dbReference>
<dbReference type="Gene3D" id="3.30.70.100">
    <property type="match status" value="1"/>
</dbReference>
<dbReference type="InterPro" id="IPR049740">
    <property type="entry name" value="CopZ"/>
</dbReference>
<dbReference type="InterPro" id="IPR017969">
    <property type="entry name" value="Heavy-metal-associated_CS"/>
</dbReference>
<dbReference type="InterPro" id="IPR006122">
    <property type="entry name" value="HMA_Cu_ion-bd"/>
</dbReference>
<dbReference type="InterPro" id="IPR006121">
    <property type="entry name" value="HMA_dom"/>
</dbReference>
<dbReference type="InterPro" id="IPR036163">
    <property type="entry name" value="HMA_dom_sf"/>
</dbReference>
<dbReference type="InterPro" id="IPR001802">
    <property type="entry name" value="MerP/CopZ"/>
</dbReference>
<dbReference type="NCBIfam" id="NF033795">
    <property type="entry name" value="chaper_CopZ_Bs"/>
    <property type="match status" value="1"/>
</dbReference>
<dbReference type="NCBIfam" id="TIGR00003">
    <property type="entry name" value="copper ion binding protein"/>
    <property type="match status" value="1"/>
</dbReference>
<dbReference type="PANTHER" id="PTHR46594">
    <property type="entry name" value="P-TYPE CATION-TRANSPORTING ATPASE"/>
    <property type="match status" value="1"/>
</dbReference>
<dbReference type="PANTHER" id="PTHR46594:SF4">
    <property type="entry name" value="P-TYPE CATION-TRANSPORTING ATPASE"/>
    <property type="match status" value="1"/>
</dbReference>
<dbReference type="Pfam" id="PF00403">
    <property type="entry name" value="HMA"/>
    <property type="match status" value="1"/>
</dbReference>
<dbReference type="PRINTS" id="PR00946">
    <property type="entry name" value="HGSCAVENGER"/>
</dbReference>
<dbReference type="SUPFAM" id="SSF55008">
    <property type="entry name" value="HMA, heavy metal-associated domain"/>
    <property type="match status" value="1"/>
</dbReference>
<dbReference type="PROSITE" id="PS01047">
    <property type="entry name" value="HMA_1"/>
    <property type="match status" value="1"/>
</dbReference>
<dbReference type="PROSITE" id="PS50846">
    <property type="entry name" value="HMA_2"/>
    <property type="match status" value="1"/>
</dbReference>
<evidence type="ECO:0000250" key="1"/>
<evidence type="ECO:0000255" key="2">
    <source>
        <dbReference type="PROSITE-ProRule" id="PRU00280"/>
    </source>
</evidence>
<feature type="chain" id="PRO_0000351281" description="Copper chaperone CopZ">
    <location>
        <begin position="1"/>
        <end position="68"/>
    </location>
</feature>
<feature type="domain" description="HMA" evidence="2">
    <location>
        <begin position="2"/>
        <end position="68"/>
    </location>
</feature>
<feature type="binding site" evidence="2">
    <location>
        <position position="13"/>
    </location>
    <ligand>
        <name>Cu cation</name>
        <dbReference type="ChEBI" id="CHEBI:23378"/>
    </ligand>
</feature>
<feature type="binding site" evidence="2">
    <location>
        <position position="16"/>
    </location>
    <ligand>
        <name>Cu cation</name>
        <dbReference type="ChEBI" id="CHEBI:23378"/>
    </ligand>
</feature>
<reference key="1">
    <citation type="journal article" date="2008" name="J. Bacteriol.">
        <title>Genome sequence of Staphylococcus aureus strain Newman and comparative analysis of staphylococcal genomes: polymorphism and evolution of two major pathogenicity islands.</title>
        <authorList>
            <person name="Baba T."/>
            <person name="Bae T."/>
            <person name="Schneewind O."/>
            <person name="Takeuchi F."/>
            <person name="Hiramatsu K."/>
        </authorList>
    </citation>
    <scope>NUCLEOTIDE SEQUENCE [LARGE SCALE GENOMIC DNA]</scope>
    <source>
        <strain>Newman</strain>
    </source>
</reference>
<comment type="function">
    <text evidence="1">Chaperone that serves for the intracellular sequestration and transport of Cu(+). Delivers Cu(+) to the copper-exporting P-type ATPase A (CopA) (By similarity).</text>
</comment>
<comment type="subcellular location">
    <subcellularLocation>
        <location evidence="1">Cytoplasm</location>
    </subcellularLocation>
</comment>
<organism>
    <name type="scientific">Staphylococcus aureus (strain Newman)</name>
    <dbReference type="NCBI Taxonomy" id="426430"/>
    <lineage>
        <taxon>Bacteria</taxon>
        <taxon>Bacillati</taxon>
        <taxon>Bacillota</taxon>
        <taxon>Bacilli</taxon>
        <taxon>Bacillales</taxon>
        <taxon>Staphylococcaceae</taxon>
        <taxon>Staphylococcus</taxon>
    </lineage>
</organism>
<protein>
    <recommendedName>
        <fullName>Copper chaperone CopZ</fullName>
    </recommendedName>
</protein>